<feature type="chain" id="PRO_0000074475" description="Defensin, isoforms B and C">
    <location>
        <begin position="1"/>
        <end position="43"/>
    </location>
</feature>
<feature type="disulfide bond" evidence="1">
    <location>
        <begin position="3"/>
        <end position="34"/>
    </location>
</feature>
<feature type="disulfide bond" evidence="1">
    <location>
        <begin position="20"/>
        <end position="40"/>
    </location>
</feature>
<feature type="disulfide bond" evidence="1">
    <location>
        <begin position="24"/>
        <end position="42"/>
    </location>
</feature>
<feature type="sequence variant" description="In isoform C.">
    <original>R</original>
    <variation>T</variation>
    <location>
        <position position="30"/>
    </location>
</feature>
<sequence>FTCDVLGFEIAGTKLNSAACGAHCLALGRRGGYCNSKSVCVCR</sequence>
<keyword id="KW-0044">Antibiotic</keyword>
<keyword id="KW-0929">Antimicrobial</keyword>
<keyword id="KW-0211">Defensin</keyword>
<keyword id="KW-0903">Direct protein sequencing</keyword>
<keyword id="KW-1015">Disulfide bond</keyword>
<keyword id="KW-0391">Immunity</keyword>
<keyword id="KW-0399">Innate immunity</keyword>
<keyword id="KW-0964">Secreted</keyword>
<organism>
    <name type="scientific">Zophobas atratus</name>
    <name type="common">Giant mealworm beetle</name>
    <name type="synonym">Zophobas rugipes</name>
    <dbReference type="NCBI Taxonomy" id="7074"/>
    <lineage>
        <taxon>Eukaryota</taxon>
        <taxon>Metazoa</taxon>
        <taxon>Ecdysozoa</taxon>
        <taxon>Arthropoda</taxon>
        <taxon>Hexapoda</taxon>
        <taxon>Insecta</taxon>
        <taxon>Pterygota</taxon>
        <taxon>Neoptera</taxon>
        <taxon>Endopterygota</taxon>
        <taxon>Coleoptera</taxon>
        <taxon>Polyphaga</taxon>
        <taxon>Cucujiformia</taxon>
        <taxon>Tenebrionidae</taxon>
        <taxon>Zophobas</taxon>
    </lineage>
</organism>
<accession>P80033</accession>
<protein>
    <recommendedName>
        <fullName>Defensin, isoforms B and C</fullName>
    </recommendedName>
</protein>
<comment type="function">
    <text>Involved in anti Gram-positive activity of immune hemolymph of Z.atratus.</text>
</comment>
<comment type="subcellular location">
    <subcellularLocation>
        <location>Secreted</location>
    </subcellularLocation>
</comment>
<comment type="similarity">
    <text evidence="1">Belongs to the invertebrate defensin family. Type 1 subfamily.</text>
</comment>
<evidence type="ECO:0000255" key="1">
    <source>
        <dbReference type="PROSITE-ProRule" id="PRU00710"/>
    </source>
</evidence>
<name>DEFA_ZOPAT</name>
<dbReference type="PIR" id="B41711">
    <property type="entry name" value="B41711"/>
</dbReference>
<dbReference type="PIR" id="C41711">
    <property type="entry name" value="C41711"/>
</dbReference>
<dbReference type="SMR" id="P80033"/>
<dbReference type="GO" id="GO:0005615">
    <property type="term" value="C:extracellular space"/>
    <property type="evidence" value="ECO:0007669"/>
    <property type="project" value="TreeGrafter"/>
</dbReference>
<dbReference type="GO" id="GO:0042742">
    <property type="term" value="P:defense response to bacterium"/>
    <property type="evidence" value="ECO:0007669"/>
    <property type="project" value="UniProtKB-KW"/>
</dbReference>
<dbReference type="GO" id="GO:0006959">
    <property type="term" value="P:humoral immune response"/>
    <property type="evidence" value="ECO:0007669"/>
    <property type="project" value="TreeGrafter"/>
</dbReference>
<dbReference type="GO" id="GO:0045087">
    <property type="term" value="P:innate immune response"/>
    <property type="evidence" value="ECO:0007669"/>
    <property type="project" value="UniProtKB-KW"/>
</dbReference>
<dbReference type="CDD" id="cd21806">
    <property type="entry name" value="DEFL_defensin-like"/>
    <property type="match status" value="1"/>
</dbReference>
<dbReference type="FunFam" id="3.30.30.10:FF:000005">
    <property type="entry name" value="Defensin"/>
    <property type="match status" value="1"/>
</dbReference>
<dbReference type="Gene3D" id="3.30.30.10">
    <property type="entry name" value="Knottin, scorpion toxin-like"/>
    <property type="match status" value="1"/>
</dbReference>
<dbReference type="InterPro" id="IPR001542">
    <property type="entry name" value="Defensin_invertebrate/fungal"/>
</dbReference>
<dbReference type="InterPro" id="IPR036574">
    <property type="entry name" value="Scorpion_toxin-like_sf"/>
</dbReference>
<dbReference type="PANTHER" id="PTHR13645">
    <property type="entry name" value="DEFENSIN"/>
    <property type="match status" value="1"/>
</dbReference>
<dbReference type="PANTHER" id="PTHR13645:SF0">
    <property type="entry name" value="DEFENSIN"/>
    <property type="match status" value="1"/>
</dbReference>
<dbReference type="Pfam" id="PF01097">
    <property type="entry name" value="Defensin_2"/>
    <property type="match status" value="1"/>
</dbReference>
<dbReference type="SUPFAM" id="SSF57095">
    <property type="entry name" value="Scorpion toxin-like"/>
    <property type="match status" value="1"/>
</dbReference>
<dbReference type="PROSITE" id="PS51378">
    <property type="entry name" value="INVERT_DEFENSINS"/>
    <property type="match status" value="1"/>
</dbReference>
<reference key="1">
    <citation type="journal article" date="1991" name="J. Biol. Chem.">
        <title>Insect immunity. Isolation from a coleopteran insect of a novel inducible antibacterial peptide and of new members of the insect defensin family.</title>
        <authorList>
            <person name="Bulet P."/>
            <person name="Cociancich S."/>
            <person name="Dimarcq J.-L."/>
            <person name="Lambert J."/>
            <person name="Reichhart J.-M."/>
            <person name="Hoffmann D."/>
            <person name="Hetru C."/>
            <person name="Hoffmann J.A."/>
        </authorList>
    </citation>
    <scope>PROTEIN SEQUENCE</scope>
    <source>
        <tissue>Hemolymph</tissue>
    </source>
</reference>
<proteinExistence type="evidence at protein level"/>